<dbReference type="EC" id="7.1.1.-" evidence="1"/>
<dbReference type="EMBL" id="AE009442">
    <property type="protein sequence ID" value="AAO28137.1"/>
    <property type="molecule type" value="Genomic_DNA"/>
</dbReference>
<dbReference type="RefSeq" id="WP_011097562.1">
    <property type="nucleotide sequence ID" value="NC_004556.1"/>
</dbReference>
<dbReference type="SMR" id="Q87EQ2"/>
<dbReference type="KEGG" id="xft:PD_0251"/>
<dbReference type="HOGENOM" id="CLU_015134_1_1_6"/>
<dbReference type="Proteomes" id="UP000002516">
    <property type="component" value="Chromosome"/>
</dbReference>
<dbReference type="GO" id="GO:0005886">
    <property type="term" value="C:plasma membrane"/>
    <property type="evidence" value="ECO:0007669"/>
    <property type="project" value="UniProtKB-SubCell"/>
</dbReference>
<dbReference type="GO" id="GO:0051287">
    <property type="term" value="F:NAD binding"/>
    <property type="evidence" value="ECO:0007669"/>
    <property type="project" value="InterPro"/>
</dbReference>
<dbReference type="GO" id="GO:0050136">
    <property type="term" value="F:NADH:ubiquinone reductase (non-electrogenic) activity"/>
    <property type="evidence" value="ECO:0007669"/>
    <property type="project" value="UniProtKB-UniRule"/>
</dbReference>
<dbReference type="GO" id="GO:0048038">
    <property type="term" value="F:quinone binding"/>
    <property type="evidence" value="ECO:0007669"/>
    <property type="project" value="UniProtKB-KW"/>
</dbReference>
<dbReference type="FunFam" id="1.10.645.10:FF:000005">
    <property type="entry name" value="NADH-quinone oxidoreductase subunit D"/>
    <property type="match status" value="1"/>
</dbReference>
<dbReference type="Gene3D" id="1.10.645.10">
    <property type="entry name" value="Cytochrome-c3 Hydrogenase, chain B"/>
    <property type="match status" value="1"/>
</dbReference>
<dbReference type="HAMAP" id="MF_01358">
    <property type="entry name" value="NDH1_NuoD"/>
    <property type="match status" value="1"/>
</dbReference>
<dbReference type="InterPro" id="IPR001135">
    <property type="entry name" value="NADH_Q_OxRdtase_suD"/>
</dbReference>
<dbReference type="InterPro" id="IPR014029">
    <property type="entry name" value="NADH_UbQ_OxRdtase_49kDa_CS"/>
</dbReference>
<dbReference type="InterPro" id="IPR022885">
    <property type="entry name" value="NDH1_su_D/H"/>
</dbReference>
<dbReference type="InterPro" id="IPR029014">
    <property type="entry name" value="NiFe-Hase_large"/>
</dbReference>
<dbReference type="NCBIfam" id="TIGR01962">
    <property type="entry name" value="NuoD"/>
    <property type="match status" value="1"/>
</dbReference>
<dbReference type="NCBIfam" id="NF004739">
    <property type="entry name" value="PRK06075.1"/>
    <property type="match status" value="1"/>
</dbReference>
<dbReference type="PANTHER" id="PTHR11993:SF10">
    <property type="entry name" value="NADH DEHYDROGENASE [UBIQUINONE] IRON-SULFUR PROTEIN 2, MITOCHONDRIAL"/>
    <property type="match status" value="1"/>
</dbReference>
<dbReference type="PANTHER" id="PTHR11993">
    <property type="entry name" value="NADH-UBIQUINONE OXIDOREDUCTASE 49 KDA SUBUNIT"/>
    <property type="match status" value="1"/>
</dbReference>
<dbReference type="Pfam" id="PF00346">
    <property type="entry name" value="Complex1_49kDa"/>
    <property type="match status" value="1"/>
</dbReference>
<dbReference type="SUPFAM" id="SSF56762">
    <property type="entry name" value="HydB/Nqo4-like"/>
    <property type="match status" value="1"/>
</dbReference>
<dbReference type="PROSITE" id="PS00535">
    <property type="entry name" value="COMPLEX1_49K"/>
    <property type="match status" value="1"/>
</dbReference>
<protein>
    <recommendedName>
        <fullName evidence="1">NADH-quinone oxidoreductase subunit D</fullName>
        <ecNumber evidence="1">7.1.1.-</ecNumber>
    </recommendedName>
    <alternativeName>
        <fullName evidence="1">NADH dehydrogenase I subunit D</fullName>
    </alternativeName>
    <alternativeName>
        <fullName evidence="1">NDH-1 subunit D</fullName>
    </alternativeName>
</protein>
<reference key="1">
    <citation type="journal article" date="2003" name="J. Bacteriol.">
        <title>Comparative analyses of the complete genome sequences of Pierce's disease and citrus variegated chlorosis strains of Xylella fastidiosa.</title>
        <authorList>
            <person name="Van Sluys M.A."/>
            <person name="de Oliveira M.C."/>
            <person name="Monteiro-Vitorello C.B."/>
            <person name="Miyaki C.Y."/>
            <person name="Furlan L.R."/>
            <person name="Camargo L.E.A."/>
            <person name="da Silva A.C.R."/>
            <person name="Moon D.H."/>
            <person name="Takita M.A."/>
            <person name="Lemos E.G.M."/>
            <person name="Machado M.A."/>
            <person name="Ferro M.I.T."/>
            <person name="da Silva F.R."/>
            <person name="Goldman M.H.S."/>
            <person name="Goldman G.H."/>
            <person name="Lemos M.V.F."/>
            <person name="El-Dorry H."/>
            <person name="Tsai S.M."/>
            <person name="Carrer H."/>
            <person name="Carraro D.M."/>
            <person name="de Oliveira R.C."/>
            <person name="Nunes L.R."/>
            <person name="Siqueira W.J."/>
            <person name="Coutinho L.L."/>
            <person name="Kimura E.T."/>
            <person name="Ferro E.S."/>
            <person name="Harakava R."/>
            <person name="Kuramae E.E."/>
            <person name="Marino C.L."/>
            <person name="Giglioti E."/>
            <person name="Abreu I.L."/>
            <person name="Alves L.M.C."/>
            <person name="do Amaral A.M."/>
            <person name="Baia G.S."/>
            <person name="Blanco S.R."/>
            <person name="Brito M.S."/>
            <person name="Cannavan F.S."/>
            <person name="Celestino A.V."/>
            <person name="da Cunha A.F."/>
            <person name="Fenille R.C."/>
            <person name="Ferro J.A."/>
            <person name="Formighieri E.F."/>
            <person name="Kishi L.T."/>
            <person name="Leoni S.G."/>
            <person name="Oliveira A.R."/>
            <person name="Rosa V.E. Jr."/>
            <person name="Sassaki F.T."/>
            <person name="Sena J.A.D."/>
            <person name="de Souza A.A."/>
            <person name="Truffi D."/>
            <person name="Tsukumo F."/>
            <person name="Yanai G.M."/>
            <person name="Zaros L.G."/>
            <person name="Civerolo E.L."/>
            <person name="Simpson A.J.G."/>
            <person name="Almeida N.F. Jr."/>
            <person name="Setubal J.C."/>
            <person name="Kitajima J.P."/>
        </authorList>
    </citation>
    <scope>NUCLEOTIDE SEQUENCE [LARGE SCALE GENOMIC DNA]</scope>
    <source>
        <strain>Temecula1 / ATCC 700964</strain>
    </source>
</reference>
<comment type="function">
    <text evidence="1">NDH-1 shuttles electrons from NADH, via FMN and iron-sulfur (Fe-S) centers, to quinones in the respiratory chain. The immediate electron acceptor for the enzyme in this species is believed to be ubiquinone. Couples the redox reaction to proton translocation (for every two electrons transferred, four hydrogen ions are translocated across the cytoplasmic membrane), and thus conserves the redox energy in a proton gradient.</text>
</comment>
<comment type="catalytic activity">
    <reaction evidence="1">
        <text>a quinone + NADH + 5 H(+)(in) = a quinol + NAD(+) + 4 H(+)(out)</text>
        <dbReference type="Rhea" id="RHEA:57888"/>
        <dbReference type="ChEBI" id="CHEBI:15378"/>
        <dbReference type="ChEBI" id="CHEBI:24646"/>
        <dbReference type="ChEBI" id="CHEBI:57540"/>
        <dbReference type="ChEBI" id="CHEBI:57945"/>
        <dbReference type="ChEBI" id="CHEBI:132124"/>
    </reaction>
</comment>
<comment type="subunit">
    <text evidence="1">NDH-1 is composed of 14 different subunits. Subunits NuoB, C, D, E, F, and G constitute the peripheral sector of the complex.</text>
</comment>
<comment type="subcellular location">
    <subcellularLocation>
        <location evidence="1">Cell inner membrane</location>
        <topology evidence="1">Peripheral membrane protein</topology>
        <orientation evidence="1">Cytoplasmic side</orientation>
    </subcellularLocation>
</comment>
<comment type="similarity">
    <text evidence="1">Belongs to the complex I 49 kDa subunit family.</text>
</comment>
<sequence length="435" mass="49394">MNQIRQAPAASASNATESKQEIRNYTMNFGPQHPAAHGVLRLILEMDGETVVRADPHIGLLHRGTEKLAESKPFNQSIGYMDRLDYVSMMCNEHAYVRAIETLIGIQAPERAQYIRTMFDEITRILNHLMWLGSNALDLGAMAVMLYAFREREELMDVYEAISGARMHAAYYRPGGVYRDLPDTMPKYKESRWHKGKALKRLNAAREGSMLDFLEHFTDTFPQRIDEYETLLTDNRIWKQRTVGVGVIEPDVAKAWGMTGVMLRGSGIAWDLRKKQPYAKYDAVDFDIPLGTCGDCYDRYLCRVAEMRESNRIIKQCVQWLKMNPGQVMVENCKVAPPKRESMKDDMEALIHHFKLFSEGYCVPAGETYSAVEAPKGEFGCYLISDGANKPFRVHLRAPGFAHLSSMDAVVRGYMLADVVAMIGTYDLVFGEVDR</sequence>
<keyword id="KW-0997">Cell inner membrane</keyword>
<keyword id="KW-1003">Cell membrane</keyword>
<keyword id="KW-0472">Membrane</keyword>
<keyword id="KW-0520">NAD</keyword>
<keyword id="KW-0874">Quinone</keyword>
<keyword id="KW-1185">Reference proteome</keyword>
<keyword id="KW-1278">Translocase</keyword>
<keyword id="KW-0813">Transport</keyword>
<keyword id="KW-0830">Ubiquinone</keyword>
<feature type="chain" id="PRO_0000371956" description="NADH-quinone oxidoreductase subunit D">
    <location>
        <begin position="1"/>
        <end position="435"/>
    </location>
</feature>
<evidence type="ECO:0000255" key="1">
    <source>
        <dbReference type="HAMAP-Rule" id="MF_01358"/>
    </source>
</evidence>
<name>NUOD_XYLFT</name>
<accession>Q87EQ2</accession>
<proteinExistence type="inferred from homology"/>
<organism>
    <name type="scientific">Xylella fastidiosa (strain Temecula1 / ATCC 700964)</name>
    <dbReference type="NCBI Taxonomy" id="183190"/>
    <lineage>
        <taxon>Bacteria</taxon>
        <taxon>Pseudomonadati</taxon>
        <taxon>Pseudomonadota</taxon>
        <taxon>Gammaproteobacteria</taxon>
        <taxon>Lysobacterales</taxon>
        <taxon>Lysobacteraceae</taxon>
        <taxon>Xylella</taxon>
    </lineage>
</organism>
<gene>
    <name evidence="1" type="primary">nuoD</name>
    <name type="ordered locus">PD_0251</name>
</gene>